<reference key="1">
    <citation type="journal article" date="1991" name="Proc. Natl. Acad. Sci. U.S.A.">
        <title>Cloning and expression of the human vasoactive intestinal peptide receptor.</title>
        <authorList>
            <person name="Sreedharan S.P."/>
            <person name="Robichon A."/>
            <person name="Peterson K.E."/>
            <person name="Goetzl E.J."/>
        </authorList>
    </citation>
    <scope>NUCLEOTIDE SEQUENCE [GENOMIC DNA / MRNA]</scope>
</reference>
<reference key="2">
    <citation type="submission" date="1996-10" db="EMBL/GenBank/DDBJ databases">
        <title>Coding and 3'-noncoding sequence of human RDC1, an orphan G protein-coupled receptor.</title>
        <authorList>
            <person name="Oates E.L."/>
            <person name="Roos B.A."/>
            <person name="Howard G.A."/>
        </authorList>
    </citation>
    <scope>NUCLEOTIDE SEQUENCE [MRNA]</scope>
</reference>
<reference key="3">
    <citation type="submission" date="1997-10" db="EMBL/GenBank/DDBJ databases">
        <title>Human RDC1 gene.</title>
        <authorList>
            <person name="Bi A."/>
            <person name="Yu L."/>
            <person name="Zhang Q."/>
            <person name="Tu Q."/>
            <person name="Xing Y."/>
            <person name="Zheng L."/>
        </authorList>
    </citation>
    <scope>NUCLEOTIDE SEQUENCE [MRNA]</scope>
</reference>
<reference key="4">
    <citation type="submission" date="2006-06" db="EMBL/GenBank/DDBJ databases">
        <title>Isolation of cDNA coding for Homo sapiens chemokine orphan receptor 1 (CMKOR1).</title>
        <authorList>
            <person name="Martin A.L."/>
            <person name="Kaighin V.A."/>
            <person name="Aronstam R.S."/>
        </authorList>
    </citation>
    <scope>NUCLEOTIDE SEQUENCE [MRNA]</scope>
</reference>
<reference key="5">
    <citation type="journal article" date="2004" name="Nat. Genet.">
        <title>Complete sequencing and characterization of 21,243 full-length human cDNAs.</title>
        <authorList>
            <person name="Ota T."/>
            <person name="Suzuki Y."/>
            <person name="Nishikawa T."/>
            <person name="Otsuki T."/>
            <person name="Sugiyama T."/>
            <person name="Irie R."/>
            <person name="Wakamatsu A."/>
            <person name="Hayashi K."/>
            <person name="Sato H."/>
            <person name="Nagai K."/>
            <person name="Kimura K."/>
            <person name="Makita H."/>
            <person name="Sekine M."/>
            <person name="Obayashi M."/>
            <person name="Nishi T."/>
            <person name="Shibahara T."/>
            <person name="Tanaka T."/>
            <person name="Ishii S."/>
            <person name="Yamamoto J."/>
            <person name="Saito K."/>
            <person name="Kawai Y."/>
            <person name="Isono Y."/>
            <person name="Nakamura Y."/>
            <person name="Nagahari K."/>
            <person name="Murakami K."/>
            <person name="Yasuda T."/>
            <person name="Iwayanagi T."/>
            <person name="Wagatsuma M."/>
            <person name="Shiratori A."/>
            <person name="Sudo H."/>
            <person name="Hosoiri T."/>
            <person name="Kaku Y."/>
            <person name="Kodaira H."/>
            <person name="Kondo H."/>
            <person name="Sugawara M."/>
            <person name="Takahashi M."/>
            <person name="Kanda K."/>
            <person name="Yokoi T."/>
            <person name="Furuya T."/>
            <person name="Kikkawa E."/>
            <person name="Omura Y."/>
            <person name="Abe K."/>
            <person name="Kamihara K."/>
            <person name="Katsuta N."/>
            <person name="Sato K."/>
            <person name="Tanikawa M."/>
            <person name="Yamazaki M."/>
            <person name="Ninomiya K."/>
            <person name="Ishibashi T."/>
            <person name="Yamashita H."/>
            <person name="Murakawa K."/>
            <person name="Fujimori K."/>
            <person name="Tanai H."/>
            <person name="Kimata M."/>
            <person name="Watanabe M."/>
            <person name="Hiraoka S."/>
            <person name="Chiba Y."/>
            <person name="Ishida S."/>
            <person name="Ono Y."/>
            <person name="Takiguchi S."/>
            <person name="Watanabe S."/>
            <person name="Yosida M."/>
            <person name="Hotuta T."/>
            <person name="Kusano J."/>
            <person name="Kanehori K."/>
            <person name="Takahashi-Fujii A."/>
            <person name="Hara H."/>
            <person name="Tanase T.-O."/>
            <person name="Nomura Y."/>
            <person name="Togiya S."/>
            <person name="Komai F."/>
            <person name="Hara R."/>
            <person name="Takeuchi K."/>
            <person name="Arita M."/>
            <person name="Imose N."/>
            <person name="Musashino K."/>
            <person name="Yuuki H."/>
            <person name="Oshima A."/>
            <person name="Sasaki N."/>
            <person name="Aotsuka S."/>
            <person name="Yoshikawa Y."/>
            <person name="Matsunawa H."/>
            <person name="Ichihara T."/>
            <person name="Shiohata N."/>
            <person name="Sano S."/>
            <person name="Moriya S."/>
            <person name="Momiyama H."/>
            <person name="Satoh N."/>
            <person name="Takami S."/>
            <person name="Terashima Y."/>
            <person name="Suzuki O."/>
            <person name="Nakagawa S."/>
            <person name="Senoh A."/>
            <person name="Mizoguchi H."/>
            <person name="Goto Y."/>
            <person name="Shimizu F."/>
            <person name="Wakebe H."/>
            <person name="Hishigaki H."/>
            <person name="Watanabe T."/>
            <person name="Sugiyama A."/>
            <person name="Takemoto M."/>
            <person name="Kawakami B."/>
            <person name="Yamazaki M."/>
            <person name="Watanabe K."/>
            <person name="Kumagai A."/>
            <person name="Itakura S."/>
            <person name="Fukuzumi Y."/>
            <person name="Fujimori Y."/>
            <person name="Komiyama M."/>
            <person name="Tashiro H."/>
            <person name="Tanigami A."/>
            <person name="Fujiwara T."/>
            <person name="Ono T."/>
            <person name="Yamada K."/>
            <person name="Fujii Y."/>
            <person name="Ozaki K."/>
            <person name="Hirao M."/>
            <person name="Ohmori Y."/>
            <person name="Kawabata A."/>
            <person name="Hikiji T."/>
            <person name="Kobatake N."/>
            <person name="Inagaki H."/>
            <person name="Ikema Y."/>
            <person name="Okamoto S."/>
            <person name="Okitani R."/>
            <person name="Kawakami T."/>
            <person name="Noguchi S."/>
            <person name="Itoh T."/>
            <person name="Shigeta K."/>
            <person name="Senba T."/>
            <person name="Matsumura K."/>
            <person name="Nakajima Y."/>
            <person name="Mizuno T."/>
            <person name="Morinaga M."/>
            <person name="Sasaki M."/>
            <person name="Togashi T."/>
            <person name="Oyama M."/>
            <person name="Hata H."/>
            <person name="Watanabe M."/>
            <person name="Komatsu T."/>
            <person name="Mizushima-Sugano J."/>
            <person name="Satoh T."/>
            <person name="Shirai Y."/>
            <person name="Takahashi Y."/>
            <person name="Nakagawa K."/>
            <person name="Okumura K."/>
            <person name="Nagase T."/>
            <person name="Nomura N."/>
            <person name="Kikuchi H."/>
            <person name="Masuho Y."/>
            <person name="Yamashita R."/>
            <person name="Nakai K."/>
            <person name="Yada T."/>
            <person name="Nakamura Y."/>
            <person name="Ohara O."/>
            <person name="Isogai T."/>
            <person name="Sugano S."/>
        </authorList>
    </citation>
    <scope>NUCLEOTIDE SEQUENCE [LARGE SCALE MRNA]</scope>
    <source>
        <tissue>Placenta</tissue>
    </source>
</reference>
<reference key="6">
    <citation type="journal article" date="2005" name="Nature">
        <title>Generation and annotation of the DNA sequences of human chromosomes 2 and 4.</title>
        <authorList>
            <person name="Hillier L.W."/>
            <person name="Graves T.A."/>
            <person name="Fulton R.S."/>
            <person name="Fulton L.A."/>
            <person name="Pepin K.H."/>
            <person name="Minx P."/>
            <person name="Wagner-McPherson C."/>
            <person name="Layman D."/>
            <person name="Wylie K."/>
            <person name="Sekhon M."/>
            <person name="Becker M.C."/>
            <person name="Fewell G.A."/>
            <person name="Delehaunty K.D."/>
            <person name="Miner T.L."/>
            <person name="Nash W.E."/>
            <person name="Kremitzki C."/>
            <person name="Oddy L."/>
            <person name="Du H."/>
            <person name="Sun H."/>
            <person name="Bradshaw-Cordum H."/>
            <person name="Ali J."/>
            <person name="Carter J."/>
            <person name="Cordes M."/>
            <person name="Harris A."/>
            <person name="Isak A."/>
            <person name="van Brunt A."/>
            <person name="Nguyen C."/>
            <person name="Du F."/>
            <person name="Courtney L."/>
            <person name="Kalicki J."/>
            <person name="Ozersky P."/>
            <person name="Abbott S."/>
            <person name="Armstrong J."/>
            <person name="Belter E.A."/>
            <person name="Caruso L."/>
            <person name="Cedroni M."/>
            <person name="Cotton M."/>
            <person name="Davidson T."/>
            <person name="Desai A."/>
            <person name="Elliott G."/>
            <person name="Erb T."/>
            <person name="Fronick C."/>
            <person name="Gaige T."/>
            <person name="Haakenson W."/>
            <person name="Haglund K."/>
            <person name="Holmes A."/>
            <person name="Harkins R."/>
            <person name="Kim K."/>
            <person name="Kruchowski S.S."/>
            <person name="Strong C.M."/>
            <person name="Grewal N."/>
            <person name="Goyea E."/>
            <person name="Hou S."/>
            <person name="Levy A."/>
            <person name="Martinka S."/>
            <person name="Mead K."/>
            <person name="McLellan M.D."/>
            <person name="Meyer R."/>
            <person name="Randall-Maher J."/>
            <person name="Tomlinson C."/>
            <person name="Dauphin-Kohlberg S."/>
            <person name="Kozlowicz-Reilly A."/>
            <person name="Shah N."/>
            <person name="Swearengen-Shahid S."/>
            <person name="Snider J."/>
            <person name="Strong J.T."/>
            <person name="Thompson J."/>
            <person name="Yoakum M."/>
            <person name="Leonard S."/>
            <person name="Pearman C."/>
            <person name="Trani L."/>
            <person name="Radionenko M."/>
            <person name="Waligorski J.E."/>
            <person name="Wang C."/>
            <person name="Rock S.M."/>
            <person name="Tin-Wollam A.-M."/>
            <person name="Maupin R."/>
            <person name="Latreille P."/>
            <person name="Wendl M.C."/>
            <person name="Yang S.-P."/>
            <person name="Pohl C."/>
            <person name="Wallis J.W."/>
            <person name="Spieth J."/>
            <person name="Bieri T.A."/>
            <person name="Berkowicz N."/>
            <person name="Nelson J.O."/>
            <person name="Osborne J."/>
            <person name="Ding L."/>
            <person name="Meyer R."/>
            <person name="Sabo A."/>
            <person name="Shotland Y."/>
            <person name="Sinha P."/>
            <person name="Wohldmann P.E."/>
            <person name="Cook L.L."/>
            <person name="Hickenbotham M.T."/>
            <person name="Eldred J."/>
            <person name="Williams D."/>
            <person name="Jones T.A."/>
            <person name="She X."/>
            <person name="Ciccarelli F.D."/>
            <person name="Izaurralde E."/>
            <person name="Taylor J."/>
            <person name="Schmutz J."/>
            <person name="Myers R.M."/>
            <person name="Cox D.R."/>
            <person name="Huang X."/>
            <person name="McPherson J.D."/>
            <person name="Mardis E.R."/>
            <person name="Clifton S.W."/>
            <person name="Warren W.C."/>
            <person name="Chinwalla A.T."/>
            <person name="Eddy S.R."/>
            <person name="Marra M.A."/>
            <person name="Ovcharenko I."/>
            <person name="Furey T.S."/>
            <person name="Miller W."/>
            <person name="Eichler E.E."/>
            <person name="Bork P."/>
            <person name="Suyama M."/>
            <person name="Torrents D."/>
            <person name="Waterston R.H."/>
            <person name="Wilson R.K."/>
        </authorList>
    </citation>
    <scope>NUCLEOTIDE SEQUENCE [LARGE SCALE GENOMIC DNA]</scope>
</reference>
<reference key="7">
    <citation type="submission" date="2005-07" db="EMBL/GenBank/DDBJ databases">
        <authorList>
            <person name="Mural R.J."/>
            <person name="Istrail S."/>
            <person name="Sutton G.G."/>
            <person name="Florea L."/>
            <person name="Halpern A.L."/>
            <person name="Mobarry C.M."/>
            <person name="Lippert R."/>
            <person name="Walenz B."/>
            <person name="Shatkay H."/>
            <person name="Dew I."/>
            <person name="Miller J.R."/>
            <person name="Flanigan M.J."/>
            <person name="Edwards N.J."/>
            <person name="Bolanos R."/>
            <person name="Fasulo D."/>
            <person name="Halldorsson B.V."/>
            <person name="Hannenhalli S."/>
            <person name="Turner R."/>
            <person name="Yooseph S."/>
            <person name="Lu F."/>
            <person name="Nusskern D.R."/>
            <person name="Shue B.C."/>
            <person name="Zheng X.H."/>
            <person name="Zhong F."/>
            <person name="Delcher A.L."/>
            <person name="Huson D.H."/>
            <person name="Kravitz S.A."/>
            <person name="Mouchard L."/>
            <person name="Reinert K."/>
            <person name="Remington K.A."/>
            <person name="Clark A.G."/>
            <person name="Waterman M.S."/>
            <person name="Eichler E.E."/>
            <person name="Adams M.D."/>
            <person name="Hunkapiller M.W."/>
            <person name="Myers E.W."/>
            <person name="Venter J.C."/>
        </authorList>
    </citation>
    <scope>NUCLEOTIDE SEQUENCE [LARGE SCALE GENOMIC DNA]</scope>
</reference>
<reference key="8">
    <citation type="journal article" date="2004" name="Genome Res.">
        <title>The status, quality, and expansion of the NIH full-length cDNA project: the Mammalian Gene Collection (MGC).</title>
        <authorList>
            <consortium name="The MGC Project Team"/>
        </authorList>
    </citation>
    <scope>NUCLEOTIDE SEQUENCE [LARGE SCALE MRNA]</scope>
    <source>
        <tissue>Testis</tissue>
    </source>
</reference>
<reference key="9">
    <citation type="journal article" date="1992" name="Trends Pharmacol. Sci.">
        <title>RDC1 may not be VIP receptor.</title>
        <authorList>
            <person name="Nagata S."/>
            <person name="Ishihara T."/>
            <person name="Robberecht P."/>
            <person name="Libert F."/>
            <person name="Parmentier M."/>
            <person name="Christophe J."/>
            <person name="Vassart G."/>
        </authorList>
    </citation>
    <scope>DOUBTS ON THE ORIGINAL FUNCTION</scope>
</reference>
<reference key="10">
    <citation type="journal article" date="2005" name="J. Biol. Chem.">
        <title>The chemokine SDF-1/CXCL12 binds to and signals through the orphan receptor RDC1 in T lymphocytes.</title>
        <authorList>
            <person name="Balabanian K."/>
            <person name="Lagane B."/>
            <person name="Infantino S."/>
            <person name="Chow K.Y."/>
            <person name="Harriague J."/>
            <person name="Moepps B."/>
            <person name="Arenzana-Seisdedos F."/>
            <person name="Thelen M."/>
            <person name="Bachelerie F."/>
        </authorList>
    </citation>
    <scope>FUNCTION</scope>
    <scope>TISSUE SPECIFICITY</scope>
</reference>
<reference key="11">
    <citation type="journal article" date="2006" name="J. Exp. Med.">
        <title>A novel chemokine receptor for SDF-1 and I-TAC involved in cell survival, cell adhesion, and tumor development.</title>
        <authorList>
            <person name="Burns J.M."/>
            <person name="Summers B.C."/>
            <person name="Wang Y."/>
            <person name="Melikian A."/>
            <person name="Berahovich R."/>
            <person name="Miao Z."/>
            <person name="Penfold M.E."/>
            <person name="Sunshine M.J."/>
            <person name="Littman D.R."/>
            <person name="Kuo C.J."/>
            <person name="Wei K."/>
            <person name="McMaster B.E."/>
            <person name="Wright K."/>
            <person name="Howard M.C."/>
            <person name="Schall T.J."/>
        </authorList>
    </citation>
    <scope>FUNCTION</scope>
</reference>
<reference key="12">
    <citation type="journal article" date="2006" name="J. Immunol.">
        <title>Expression and regulation of the orphan receptor RDC1 and its putative ligand in human dendritic and B cells.</title>
        <authorList>
            <person name="Infantino S."/>
            <person name="Moepps B."/>
            <person name="Thelen M."/>
        </authorList>
    </citation>
    <scope>TISSUE SPECIFICITY</scope>
</reference>
<reference key="13">
    <citation type="journal article" date="2007" name="Proc. Natl. Acad. Sci. U.S.A.">
        <title>Disrupted cardiac development but normal hematopoiesis in mice deficient in the second CXCL12/SDF-1 receptor, CXCR7.</title>
        <authorList>
            <person name="Sierro F."/>
            <person name="Biben C."/>
            <person name="Martinez-Munoz L."/>
            <person name="Mellado M."/>
            <person name="Ransohoff R.M."/>
            <person name="Li M."/>
            <person name="Woehl B."/>
            <person name="Leung H."/>
            <person name="Groom J."/>
            <person name="Batten M."/>
            <person name="Harvey R.P."/>
            <person name="Martinez-A C."/>
            <person name="Mackay C.R."/>
            <person name="Mackay F."/>
        </authorList>
    </citation>
    <scope>FUNCTION</scope>
    <scope>HETERODIMERIZATION</scope>
</reference>
<reference key="14">
    <citation type="journal article" date="2008" name="J. Leukoc. Biol.">
        <title>A crosstalk between intracellular CXCR7 and CXCR4 involved in rapid CXCL12-triggered integrin activation but not in chemokine-triggered motility of human T lymphocytes and CD34+ cells.</title>
        <authorList>
            <person name="Hartmann T.N."/>
            <person name="Grabovsky V."/>
            <person name="Pasvolsky R."/>
            <person name="Shulman Z."/>
            <person name="Buss E.C."/>
            <person name="Spiegel A."/>
            <person name="Nagler A."/>
            <person name="Lapidot T."/>
            <person name="Thelen M."/>
            <person name="Alon R."/>
        </authorList>
    </citation>
    <scope>FUNCTION</scope>
    <scope>SUBCELLULAR LOCATION</scope>
</reference>
<reference key="15">
    <citation type="journal article" date="2009" name="Blood">
        <title>CXCR7 heterodimerizes with CXCR4 and regulates CXCL12-mediated G protein signaling.</title>
        <authorList>
            <person name="Levoye A."/>
            <person name="Balabanian K."/>
            <person name="Baleux F."/>
            <person name="Bachelerie F."/>
            <person name="Lagane B."/>
        </authorList>
    </citation>
    <scope>FUNCTION</scope>
    <scope>SUBUNIT</scope>
</reference>
<reference key="16">
    <citation type="journal article" date="2009" name="J. Immunol.">
        <title>Elucidation of CXCR7-mediated signaling events and inhibition of CXCR4-mediated tumor cell transendothelial migration by CXCR7 ligands.</title>
        <authorList>
            <person name="Zabel B.A."/>
            <person name="Wang Y."/>
            <person name="Lewen S."/>
            <person name="Berahovich R.D."/>
            <person name="Penfold M.E."/>
            <person name="Zhang P."/>
            <person name="Powers J."/>
            <person name="Summers B.C."/>
            <person name="Miao Z."/>
            <person name="Zhao B."/>
            <person name="Jalili A."/>
            <person name="Janowska-Wieczorek A."/>
            <person name="Jaen J.C."/>
            <person name="Schall T.J."/>
        </authorList>
    </citation>
    <scope>FUNCTION</scope>
    <scope>TISSUE SPECIFICITY</scope>
</reference>
<reference key="17">
    <citation type="journal article" date="2009" name="Mol. Pharmacol.">
        <title>AMD3100 is a CXCR7 ligand with allosteric agonist properties.</title>
        <authorList>
            <person name="Kalatskaya I."/>
            <person name="Berchiche Y.A."/>
            <person name="Gravel S."/>
            <person name="Limberg B.J."/>
            <person name="Rosenbaum J.S."/>
            <person name="Heveker N."/>
        </authorList>
    </citation>
    <scope>FUNCTION</scope>
    <scope>SUBUNIT</scope>
</reference>
<reference key="18">
    <citation type="journal article" date="2010" name="Cancer Res.">
        <title>The chemokine receptor CXCR7 is highly expressed in human glioma cells and mediates antiapoptotic effects.</title>
        <authorList>
            <person name="Hattermann K."/>
            <person name="Held-Feindt J."/>
            <person name="Lucius R."/>
            <person name="Muerkoster S.S."/>
            <person name="Penfold M.E."/>
            <person name="Schall T.J."/>
            <person name="Mentlein R."/>
        </authorList>
    </citation>
    <scope>FUNCTION</scope>
    <scope>TISSUE SPECIFICITY</scope>
    <scope>INDUCTION</scope>
</reference>
<reference key="19">
    <citation type="journal article" date="2010" name="Curr. Top. Microbiol. Immunol.">
        <title>Chemokine decoy receptors: structure-function and biological properties.</title>
        <authorList>
            <person name="Bonecchi R."/>
            <person name="Savino B."/>
            <person name="Borroni E.M."/>
            <person name="Mantovani A."/>
            <person name="Locati M."/>
        </authorList>
    </citation>
    <scope>REVIEW</scope>
</reference>
<reference key="20">
    <citation type="journal article" date="2010" name="Eur. J. Haematol.">
        <title>CXCR7: a new SDF-1-binding receptor in contrast to normal CD34(+) progenitors is functional and is expressed at higher level in human malignant hematopoietic cells.</title>
        <authorList>
            <person name="Tarnowski M."/>
            <person name="Liu R."/>
            <person name="Wysoczynski M."/>
            <person name="Ratajczak J."/>
            <person name="Kucia M."/>
            <person name="Ratajczak M.Z."/>
        </authorList>
    </citation>
    <scope>FUNCTION</scope>
    <scope>TISSUE SPECIFICITY</scope>
</reference>
<reference key="21">
    <citation type="journal article" date="2010" name="PLoS ONE">
        <title>CXCR7 functions as a scavenger for CXCL12 and CXCL11.</title>
        <authorList>
            <person name="Naumann U."/>
            <person name="Cameroni E."/>
            <person name="Pruenster M."/>
            <person name="Mahabaleshwar H."/>
            <person name="Raz E."/>
            <person name="Zerwes H.G."/>
            <person name="Rot A."/>
            <person name="Thelen M."/>
        </authorList>
    </citation>
    <scope>FUNCTION</scope>
    <scope>SUBCELLULAR LOCATION</scope>
    <scope>MUTAGENESIS OF SER-145 AND THR-147</scope>
</reference>
<reference key="22">
    <citation type="journal article" date="2010" name="Proc. Natl. Acad. Sci. U.S.A.">
        <title>Beta-arrestin- but not G protein-mediated signaling by the 'decoy' receptor CXCR7.</title>
        <authorList>
            <person name="Rajagopal S."/>
            <person name="Kim J."/>
            <person name="Ahn S."/>
            <person name="Craig S."/>
            <person name="Lam C.M."/>
            <person name="Gerard N.P."/>
            <person name="Gerard C."/>
            <person name="Lefkowitz R.J."/>
        </authorList>
    </citation>
    <scope>FUNCTION</scope>
</reference>
<reference key="23">
    <citation type="journal article" date="2011" name="PLoS ONE">
        <title>CXCR7 protein expression in human adult brain and differentiated neurons.</title>
        <authorList>
            <person name="Shimizu S."/>
            <person name="Brown M."/>
            <person name="Sengupta R."/>
            <person name="Penfold M.E."/>
            <person name="Meucci O."/>
        </authorList>
    </citation>
    <scope>SUBCELLULAR LOCATION</scope>
    <scope>TISSUE SPECIFICITY</scope>
</reference>
<reference key="24">
    <citation type="journal article" date="2012" name="Immunol. Lett.">
        <title>The biochemistry and biology of the atypical chemokine receptors.</title>
        <authorList>
            <person name="Graham G.J."/>
            <person name="Locati M."/>
            <person name="Mantovani A."/>
            <person name="Rot A."/>
            <person name="Thelen M."/>
        </authorList>
    </citation>
    <scope>REVIEW</scope>
</reference>
<reference key="25">
    <citation type="journal article" date="2012" name="Int. J. Biochem. Cell Biol.">
        <title>Carboxy-terminus of CXCR7 regulates receptor localization and function.</title>
        <authorList>
            <person name="Ray P."/>
            <person name="Mihalko L.A."/>
            <person name="Coggins N.L."/>
            <person name="Moudgil P."/>
            <person name="Ehrlich A."/>
            <person name="Luker K.E."/>
            <person name="Luker G.D."/>
        </authorList>
    </citation>
    <scope>FUNCTION</scope>
    <scope>SUBCELLULAR LOCATION</scope>
    <scope>C-TERMINAL CYTOPLASMIC TAIL</scope>
    <scope>INTERACTION WITH ARRB2</scope>
</reference>
<reference key="26">
    <citation type="journal article" date="2012" name="PLoS ONE">
        <title>Ubiquitination of CXCR7 controls receptor trafficking.</title>
        <authorList>
            <person name="Canals M."/>
            <person name="Scholten D.J."/>
            <person name="de Munnik S."/>
            <person name="Han M.K."/>
            <person name="Smit M.J."/>
            <person name="Leurs R."/>
        </authorList>
    </citation>
    <scope>UBIQUITINATION</scope>
    <scope>C-TERMINAL CYTOPLASMIC TAIL</scope>
    <scope>SUBCELLULAR LOCATION</scope>
    <scope>INTERACTION WITH ARRB1 AND ARRB2</scope>
</reference>
<reference key="27">
    <citation type="journal article" date="2013" name="Biochem. Soc. Trans.">
        <title>Atypical chemokine receptors: from silence to sound.</title>
        <authorList>
            <person name="Cancellieri C."/>
            <person name="Vacchini A."/>
            <person name="Locati M."/>
            <person name="Bonecchi R."/>
            <person name="Borroni E.M."/>
        </authorList>
    </citation>
    <scope>REVIEW</scope>
</reference>
<reference key="28">
    <citation type="journal article" date="2013" name="Trends Mol. Med.">
        <title>CXCR7 impact on CXCL12 biology and disease.</title>
        <authorList>
            <person name="Sanchez-Martin L."/>
            <person name="Sanchez-Mateos P."/>
            <person name="Cabanas C."/>
        </authorList>
    </citation>
    <scope>REVIEW</scope>
</reference>
<reference key="29">
    <citation type="journal article" date="2019" name="Hum. Mol. Genet.">
        <title>Decreased ACKR3 (CXCR7) function causes oculomotor synkinesis in mice and humans.</title>
        <authorList>
            <person name="Whitman M.C."/>
            <person name="Miyake N."/>
            <person name="Nguyen E.H."/>
            <person name="Bell J.L."/>
            <person name="Matos Ruiz P.M."/>
            <person name="Chan W.M."/>
            <person name="Di Gioia S.A."/>
            <person name="Mukherjee N."/>
            <person name="Barry B.J."/>
            <person name="Bosley T.M."/>
            <person name="Khan A.O."/>
            <person name="Engle E.C."/>
        </authorList>
    </citation>
    <scope>VARIANT OCABSN MET-258</scope>
    <scope>CHARACTERIZATION OF VARIANT OCABSN MET-258</scope>
    <scope>FUNCTION</scope>
    <scope>SUBCELLULAR LOCATION</scope>
</reference>
<gene>
    <name evidence="25" type="primary">ACKR3</name>
    <name type="synonym">CMKOR1</name>
    <name evidence="21" type="synonym">CXCR7</name>
    <name type="synonym">GPR159</name>
    <name evidence="20" type="synonym">RDC1</name>
</gene>
<sequence>MDLHLFDYSEPGNFSDISWPCNSSDCIVVDTVMCPNMPNKSVLLYTLSFIYIFIFVIGMIANSVVVWVNIQAKTTGYDTHCYILNLAIADLWVVLTIPVWVVSLVQHNQWPMGELTCKVTHLIFSINLFGSIFFLTCMSVDRYLSITYFTNTPSSRKKMVRRVVCILVWLLAFCVSLPDTYYLKTVTSASNNETYCRSFYPEHSIKEWLIGMELVSVVLGFAVPFSIIAVFYFLLARAISASSDQEKHSSRKIIFSYVVVFLVCWLPYHVAVLLDIFSILHYIPFTCRLEHALFTALHVTQCLSLVHCCVNPVLYSFINRNYRYELMKAFIFKYSAKTGLTKLIDASRVSETEYSALEQSTK</sequence>
<name>ACKR3_HUMAN</name>
<evidence type="ECO:0000250" key="1">
    <source>
        <dbReference type="UniProtKB" id="P56485"/>
    </source>
</evidence>
<evidence type="ECO:0000255" key="2"/>
<evidence type="ECO:0000255" key="3">
    <source>
        <dbReference type="PROSITE-ProRule" id="PRU00521"/>
    </source>
</evidence>
<evidence type="ECO:0000269" key="4">
    <source>
    </source>
</evidence>
<evidence type="ECO:0000269" key="5">
    <source>
    </source>
</evidence>
<evidence type="ECO:0000269" key="6">
    <source>
    </source>
</evidence>
<evidence type="ECO:0000269" key="7">
    <source>
    </source>
</evidence>
<evidence type="ECO:0000269" key="8">
    <source>
    </source>
</evidence>
<evidence type="ECO:0000269" key="9">
    <source>
    </source>
</evidence>
<evidence type="ECO:0000269" key="10">
    <source>
    </source>
</evidence>
<evidence type="ECO:0000269" key="11">
    <source>
    </source>
</evidence>
<evidence type="ECO:0000269" key="12">
    <source>
    </source>
</evidence>
<evidence type="ECO:0000269" key="13">
    <source>
    </source>
</evidence>
<evidence type="ECO:0000269" key="14">
    <source>
    </source>
</evidence>
<evidence type="ECO:0000269" key="15">
    <source>
    </source>
</evidence>
<evidence type="ECO:0000269" key="16">
    <source>
    </source>
</evidence>
<evidence type="ECO:0000269" key="17">
    <source>
    </source>
</evidence>
<evidence type="ECO:0000269" key="18">
    <source>
    </source>
</evidence>
<evidence type="ECO:0000269" key="19">
    <source>
    </source>
</evidence>
<evidence type="ECO:0000303" key="20">
    <source>
    </source>
</evidence>
<evidence type="ECO:0000303" key="21">
    <source>
    </source>
</evidence>
<evidence type="ECO:0000305" key="22"/>
<evidence type="ECO:0000305" key="23">
    <source>
    </source>
</evidence>
<evidence type="ECO:0000305" key="24">
    <source>
    </source>
</evidence>
<evidence type="ECO:0000312" key="25">
    <source>
        <dbReference type="HGNC" id="HGNC:23692"/>
    </source>
</evidence>
<evidence type="ECO:0007829" key="26">
    <source>
        <dbReference type="PDB" id="7SK4"/>
    </source>
</evidence>
<evidence type="ECO:0007829" key="27">
    <source>
        <dbReference type="PDB" id="7SK8"/>
    </source>
</evidence>
<comment type="function">
    <text evidence="4 6 7 8 9 10 11 12 13 14 15 17 19">Atypical chemokine receptor that controls chemokine levels and localization via high-affinity chemokine binding that is uncoupled from classic ligand-driven signal transduction cascades, resulting instead in chemokine sequestration, degradation, or transcytosis. Also known as interceptor (internalizing receptor) or chemokine-scavenging receptor or chemokine decoy receptor. Acts as a receptor for chemokines CXCL11 and CXCL12/SDF1 (PubMed:16107333, PubMed:19255243, PubMed:19380869, PubMed:20161793, PubMed:22300987). Chemokine binding does not activate G-protein-mediated signal transduction but instead induces beta-arrestin recruitment, leading to ligand internalization and activation of MAPK signaling pathway (PubMed:16940167, PubMed:18653785, PubMed:20018651). Required for regulation of CXCR4 protein levels in migrating interneurons, thereby adapting their chemokine responsiveness (PubMed:16940167, PubMed:18653785). In glioma cells, transduces signals via MEK/ERK pathway, mediating resistance to apoptosis. Promotes cell growth and survival (PubMed:16940167, PubMed:20388803). Not involved in cell migration, adhesion or proliferation of normal hematopoietic progenitors but activated by CXCL11 in malignant hemapoietic cells, leading to phosphorylation of ERK1/2 (MAPK3/MAPK1) and enhanced cell adhesion and migration (PubMed:17804806, PubMed:18653785, PubMed:19641136, PubMed:20887389). Plays a regulatory role in CXCR4-mediated activation of cell surface integrins by CXCL12 (PubMed:18653785). Required for heart valve development (PubMed:17804806). Regulates axon guidance in the oculomotor system through the regulation of CXCL12 levels (PubMed:31211835).</text>
</comment>
<comment type="function">
    <text evidence="24">(Microbial infection) Acts as a coreceptor with CXCR4 for a restricted number of HIV isolates.</text>
</comment>
<comment type="subunit">
    <text evidence="9 10 17 18">Homodimer. Can form heterodimers with CXCR4; heterodimerization may regulate CXCR4 signaling activity. Interacts with ARRB1 and ARRB2.</text>
</comment>
<comment type="interaction">
    <interactant intactId="EBI-1965291">
        <id>P25106</id>
    </interactant>
    <interactant intactId="EBI-6656842">
        <id>P37288</id>
        <label>AVPR1A</label>
    </interactant>
    <organismsDiffer>false</organismsDiffer>
    <experiments>7</experiments>
</comment>
<comment type="interaction">
    <interactant intactId="EBI-1965291">
        <id>P25106</id>
    </interactant>
    <interactant intactId="EBI-489411">
        <id>P61073</id>
        <label>CXCR4</label>
    </interactant>
    <organismsDiffer>false</organismsDiffer>
    <experiments>18</experiments>
</comment>
<comment type="subcellular location">
    <subcellularLocation>
        <location evidence="19">Cell membrane</location>
        <topology evidence="2">Multi-pass membrane protein</topology>
    </subcellularLocation>
    <subcellularLocation>
        <location evidence="18">Early endosome</location>
    </subcellularLocation>
    <subcellularLocation>
        <location evidence="18">Recycling endosome</location>
    </subcellularLocation>
    <text evidence="18">Predominantly localizes to endocytic vesicles, and upon stimulation by the ligand is internalized via clathrin-coated pits in a beta-arrestin-dependent manner. Once internalized, the ligand dissociates from the receptor, and is targeted to degradation while the receptor is recycled back to the cell membrane.</text>
</comment>
<comment type="tissue specificity">
    <text evidence="4 5 11 14 15 16">Expressed in monocytes, basophils, B-cells, umbilical vein endothelial cells (HUVEC) and B-lymphoblastoid cells. Lower expression detected in CD4+ T-lymphocytes and natural killer cells. In the brain, detected in endothelial cells and capillaries, and in mature neurons of the frontal cortex and hippocampus. Expressed in tubular formation in the kidney. Highly expressed in astroglial tumor endothelial, microglial and glioma cells. Expressed at low levels in normal CD34+ progenitor cells, but at very high levels in several myeloid malignant cell lines. Expressed in breast carcinomas but not in normal breast tissue (at protein level).</text>
</comment>
<comment type="induction">
    <text evidence="14">Up-regulated during cell differentiation in glioma cells.</text>
</comment>
<comment type="domain">
    <text evidence="18">The C-terminal cytoplasmic tail, plays a key role in: correct trafficking to the cell membrane, recruitment of beta-arrestin, ubiquitination, and in chemokine scavenging and signaling functions. The Ser/Thr residues and the Lys residues in the C-terminal cytoplasmic tail are essential for beta-arrestin recruitment and ubiquitination respectively.</text>
</comment>
<comment type="PTM">
    <text evidence="18">The Ser/Thr residues in the C-terminal cytoplasmic tail may be phosphorylated.</text>
</comment>
<comment type="PTM">
    <text evidence="18">Ubiquitinated at the Lys residues in its C-terminal cytoplasmic tail and is essential for correct trafficking from and to the cell membrane. Deubiquitinated by CXCL12-stimulation in a reversible manner.</text>
</comment>
<comment type="disease" evidence="19">
    <disease id="DI-06034">
        <name>Oculomotor-abducens synkinesis</name>
        <acronym>OCABSN</acronym>
        <description>An autosomal recessive disorder characterized by ptosis and elevation of the eyelid on ipsilateral abduction. OCABSN features are consistent with abnormal innervation of the levator palpebrae superioris muscle, which raises the eyelid, and the lateral rectus muscle, which controls lateral eye movement.</description>
        <dbReference type="MIM" id="619215"/>
    </disease>
    <text>The disease is caused by variants affecting the gene represented in this entry.</text>
</comment>
<comment type="similarity">
    <text evidence="3">Belongs to the G-protein coupled receptor 1 family. Atypical chemokine receptor subfamily.</text>
</comment>
<comment type="caution">
    <text evidence="23">Was originally thought to be the receptor for VIP.</text>
</comment>
<comment type="online information" name="Atlas of Genetics and Cytogenetics in Oncology and Haematology">
    <link uri="https://atlasgeneticsoncology.org/gene/40108/CMKOR1"/>
</comment>
<comment type="online information" name="Wikipedia">
    <link uri="https://en.wikipedia.org/wiki/CXC_chemokine_receptors"/>
    <text>CXC chemokine receptors entry</text>
</comment>
<feature type="chain" id="PRO_0000070101" description="Atypical chemokine receptor 3">
    <location>
        <begin position="1"/>
        <end position="362"/>
    </location>
</feature>
<feature type="topological domain" description="Extracellular" evidence="2">
    <location>
        <begin position="1"/>
        <end position="40"/>
    </location>
</feature>
<feature type="transmembrane region" description="Helical; Name=1" evidence="2">
    <location>
        <begin position="41"/>
        <end position="61"/>
    </location>
</feature>
<feature type="topological domain" description="Cytoplasmic" evidence="2">
    <location>
        <begin position="62"/>
        <end position="81"/>
    </location>
</feature>
<feature type="transmembrane region" description="Helical; Name=2" evidence="2">
    <location>
        <begin position="82"/>
        <end position="102"/>
    </location>
</feature>
<feature type="topological domain" description="Extracellular" evidence="2">
    <location>
        <begin position="103"/>
        <end position="118"/>
    </location>
</feature>
<feature type="transmembrane region" description="Helical; Name=3" evidence="2">
    <location>
        <begin position="119"/>
        <end position="139"/>
    </location>
</feature>
<feature type="topological domain" description="Cytoplasmic" evidence="2">
    <location>
        <begin position="140"/>
        <end position="162"/>
    </location>
</feature>
<feature type="transmembrane region" description="Helical; Name=4" evidence="2">
    <location>
        <begin position="163"/>
        <end position="183"/>
    </location>
</feature>
<feature type="topological domain" description="Extracellular" evidence="2">
    <location>
        <begin position="184"/>
        <end position="213"/>
    </location>
</feature>
<feature type="transmembrane region" description="Helical; Name=5" evidence="2">
    <location>
        <begin position="214"/>
        <end position="234"/>
    </location>
</feature>
<feature type="topological domain" description="Cytoplasmic" evidence="2">
    <location>
        <begin position="235"/>
        <end position="252"/>
    </location>
</feature>
<feature type="transmembrane region" description="Helical; Name=6" evidence="2">
    <location>
        <begin position="253"/>
        <end position="273"/>
    </location>
</feature>
<feature type="topological domain" description="Extracellular" evidence="2">
    <location>
        <begin position="274"/>
        <end position="296"/>
    </location>
</feature>
<feature type="transmembrane region" description="Helical; Name=7" evidence="2">
    <location>
        <begin position="297"/>
        <end position="319"/>
    </location>
</feature>
<feature type="topological domain" description="Cytoplasmic" evidence="2">
    <location>
        <begin position="320"/>
        <end position="362"/>
    </location>
</feature>
<feature type="region of interest" description="C-terminal cytoplasmic tail">
    <location>
        <begin position="324"/>
        <end position="362"/>
    </location>
</feature>
<feature type="modified residue" description="Phosphoserine" evidence="1">
    <location>
        <position position="347"/>
    </location>
</feature>
<feature type="modified residue" description="Phosphoserine" evidence="1">
    <location>
        <position position="350"/>
    </location>
</feature>
<feature type="modified residue" description="Phosphoserine" evidence="1">
    <location>
        <position position="355"/>
    </location>
</feature>
<feature type="glycosylation site" description="N-linked (GlcNAc...) asparagine" evidence="2">
    <location>
        <position position="13"/>
    </location>
</feature>
<feature type="glycosylation site" description="N-linked (GlcNAc...) asparagine" evidence="2">
    <location>
        <position position="22"/>
    </location>
</feature>
<feature type="glycosylation site" description="N-linked (GlcNAc...) asparagine" evidence="2">
    <location>
        <position position="39"/>
    </location>
</feature>
<feature type="disulfide bond" evidence="3">
    <location>
        <begin position="117"/>
        <end position="196"/>
    </location>
</feature>
<feature type="sequence variant" id="VAR_027477" description="In dbSNP:rs10183641.">
    <original>L</original>
    <variation>W</variation>
    <location>
        <position position="219"/>
    </location>
</feature>
<feature type="sequence variant" id="VAR_085335" description="In OCABSN; no effect on protein levels and cell membrane location; lower binding affinity for CXCL12; dbSNP:rs200582844." evidence="19">
    <original>V</original>
    <variation>M</variation>
    <location>
        <position position="258"/>
    </location>
</feature>
<feature type="mutagenesis site" description="Does not result in CXCL12-inducible chemotaxis, calcium mobilization or ERK activation, and has no effect on CXCR7-mediated CXCL12 degradation; when associated with V-147." evidence="13">
    <original>S</original>
    <variation>A</variation>
    <location>
        <position position="145"/>
    </location>
</feature>
<feature type="mutagenesis site" description="Does not result in CXCL12-inducible chemotaxis, calcium mobilization or ERK activation, and has no effect on CXCR7-mediated CXCL12 degradation; when associated with A-145." evidence="13">
    <original>T</original>
    <variation>V</variation>
    <location>
        <position position="147"/>
    </location>
</feature>
<feature type="sequence conflict" description="In Ref. 1; AAA62370." evidence="22" ref="1">
    <original>S</original>
    <variation>A</variation>
    <location>
        <position position="9"/>
    </location>
</feature>
<feature type="sequence conflict" description="In Ref. 1; AAA62370, 2; AAB16913 and 3; AAB94130." evidence="22" ref="1 2 3">
    <original>G</original>
    <variation>S</variation>
    <location>
        <position position="130"/>
    </location>
</feature>
<feature type="sequence conflict" description="In Ref. 1; AAA62370." evidence="22" ref="1">
    <original>S</original>
    <variation>G</variation>
    <location>
        <position position="131"/>
    </location>
</feature>
<feature type="sequence conflict" description="In Ref. 8; AAH36661." evidence="22" ref="8">
    <original>I</original>
    <variation>V</variation>
    <location>
        <position position="228"/>
    </location>
</feature>
<feature type="sequence conflict" description="In Ref. 1; AAA62370." evidence="22" ref="1">
    <original>ST</original>
    <variation>NA</variation>
    <location>
        <begin position="360"/>
        <end position="361"/>
    </location>
</feature>
<feature type="strand" evidence="26">
    <location>
        <begin position="31"/>
        <end position="33"/>
    </location>
</feature>
<feature type="helix" evidence="26">
    <location>
        <begin position="40"/>
        <end position="75"/>
    </location>
</feature>
<feature type="helix" evidence="26">
    <location>
        <begin position="81"/>
        <end position="95"/>
    </location>
</feature>
<feature type="helix" evidence="26">
    <location>
        <begin position="97"/>
        <end position="105"/>
    </location>
</feature>
<feature type="helix" evidence="26">
    <location>
        <begin position="114"/>
        <end position="147"/>
    </location>
</feature>
<feature type="helix" evidence="26">
    <location>
        <begin position="149"/>
        <end position="151"/>
    </location>
</feature>
<feature type="helix" evidence="26">
    <location>
        <begin position="154"/>
        <end position="181"/>
    </location>
</feature>
<feature type="strand" evidence="26">
    <location>
        <begin position="183"/>
        <end position="187"/>
    </location>
</feature>
<feature type="turn" evidence="26">
    <location>
        <begin position="189"/>
        <end position="191"/>
    </location>
</feature>
<feature type="strand" evidence="26">
    <location>
        <begin position="194"/>
        <end position="198"/>
    </location>
</feature>
<feature type="turn" evidence="26">
    <location>
        <begin position="202"/>
        <end position="204"/>
    </location>
</feature>
<feature type="helix" evidence="26">
    <location>
        <begin position="205"/>
        <end position="217"/>
    </location>
</feature>
<feature type="turn" evidence="26">
    <location>
        <begin position="218"/>
        <end position="221"/>
    </location>
</feature>
<feature type="helix" evidence="26">
    <location>
        <begin position="222"/>
        <end position="241"/>
    </location>
</feature>
<feature type="helix" evidence="26">
    <location>
        <begin position="245"/>
        <end position="248"/>
    </location>
</feature>
<feature type="helix" evidence="26">
    <location>
        <begin position="252"/>
        <end position="279"/>
    </location>
</feature>
<feature type="helix" evidence="26">
    <location>
        <begin position="287"/>
        <end position="315"/>
    </location>
</feature>
<feature type="turn" evidence="27">
    <location>
        <begin position="316"/>
        <end position="318"/>
    </location>
</feature>
<feature type="helix" evidence="26">
    <location>
        <begin position="320"/>
        <end position="330"/>
    </location>
</feature>
<proteinExistence type="evidence at protein level"/>
<dbReference type="EMBL" id="M64749">
    <property type="protein sequence ID" value="AAA62370.1"/>
    <property type="molecule type" value="mRNA"/>
</dbReference>
<dbReference type="EMBL" id="U73141">
    <property type="protein sequence ID" value="AAB18130.1"/>
    <property type="molecule type" value="Genomic_DNA"/>
</dbReference>
<dbReference type="EMBL" id="U67784">
    <property type="protein sequence ID" value="AAB16913.1"/>
    <property type="molecule type" value="mRNA"/>
</dbReference>
<dbReference type="EMBL" id="AF030297">
    <property type="protein sequence ID" value="AAB94130.1"/>
    <property type="molecule type" value="mRNA"/>
</dbReference>
<dbReference type="EMBL" id="DQ822477">
    <property type="protein sequence ID" value="ABH01258.1"/>
    <property type="molecule type" value="mRNA"/>
</dbReference>
<dbReference type="EMBL" id="AK291659">
    <property type="protein sequence ID" value="BAF84348.1"/>
    <property type="molecule type" value="mRNA"/>
</dbReference>
<dbReference type="EMBL" id="AC079611">
    <property type="protein sequence ID" value="AAX93086.1"/>
    <property type="molecule type" value="Genomic_DNA"/>
</dbReference>
<dbReference type="EMBL" id="CH471063">
    <property type="protein sequence ID" value="EAW71092.1"/>
    <property type="molecule type" value="Genomic_DNA"/>
</dbReference>
<dbReference type="EMBL" id="BC036661">
    <property type="protein sequence ID" value="AAH36661.1"/>
    <property type="molecule type" value="mRNA"/>
</dbReference>
<dbReference type="CCDS" id="CCDS2516.1"/>
<dbReference type="PIR" id="A39714">
    <property type="entry name" value="A39714"/>
</dbReference>
<dbReference type="RefSeq" id="NP_064707.1">
    <property type="nucleotide sequence ID" value="NM_020311.3"/>
</dbReference>
<dbReference type="RefSeq" id="XP_005246154.1">
    <property type="nucleotide sequence ID" value="XM_005246097.4"/>
</dbReference>
<dbReference type="RefSeq" id="XP_005246155.1">
    <property type="nucleotide sequence ID" value="XM_005246098.4"/>
</dbReference>
<dbReference type="RefSeq" id="XP_016860005.1">
    <property type="nucleotide sequence ID" value="XM_017004516.1"/>
</dbReference>
<dbReference type="RefSeq" id="XP_047301091.1">
    <property type="nucleotide sequence ID" value="XM_047445135.1"/>
</dbReference>
<dbReference type="RefSeq" id="XP_047301092.1">
    <property type="nucleotide sequence ID" value="XM_047445136.1"/>
</dbReference>
<dbReference type="RefSeq" id="XP_054199038.1">
    <property type="nucleotide sequence ID" value="XM_054343063.1"/>
</dbReference>
<dbReference type="RefSeq" id="XP_054199039.1">
    <property type="nucleotide sequence ID" value="XM_054343064.1"/>
</dbReference>
<dbReference type="RefSeq" id="XP_054199040.1">
    <property type="nucleotide sequence ID" value="XM_054343065.1"/>
</dbReference>
<dbReference type="RefSeq" id="XP_054199041.1">
    <property type="nucleotide sequence ID" value="XM_054343066.1"/>
</dbReference>
<dbReference type="RefSeq" id="XP_054199042.1">
    <property type="nucleotide sequence ID" value="XM_054343067.1"/>
</dbReference>
<dbReference type="RefSeq" id="XP_054199043.1">
    <property type="nucleotide sequence ID" value="XM_054343068.1"/>
</dbReference>
<dbReference type="PDB" id="6K3F">
    <property type="method" value="X-ray"/>
    <property type="resolution" value="2.30 A"/>
    <property type="chains" value="U/V/W/X/Y/Z=331-345"/>
</dbReference>
<dbReference type="PDB" id="7SK3">
    <property type="method" value="EM"/>
    <property type="resolution" value="3.80 A"/>
    <property type="chains" value="A=2-362"/>
</dbReference>
<dbReference type="PDB" id="7SK4">
    <property type="method" value="EM"/>
    <property type="resolution" value="3.30 A"/>
    <property type="chains" value="A=2-362"/>
</dbReference>
<dbReference type="PDB" id="7SK5">
    <property type="method" value="EM"/>
    <property type="resolution" value="4.00 A"/>
    <property type="chains" value="A=2-362"/>
</dbReference>
<dbReference type="PDB" id="7SK6">
    <property type="method" value="EM"/>
    <property type="resolution" value="4.00 A"/>
    <property type="chains" value="A=2-362"/>
</dbReference>
<dbReference type="PDB" id="7SK7">
    <property type="method" value="EM"/>
    <property type="resolution" value="3.30 A"/>
    <property type="chains" value="A=2-362"/>
</dbReference>
<dbReference type="PDB" id="7SK8">
    <property type="method" value="EM"/>
    <property type="resolution" value="3.30 A"/>
    <property type="chains" value="A=2-362"/>
</dbReference>
<dbReference type="PDB" id="7SK9">
    <property type="method" value="EM"/>
    <property type="resolution" value="3.70 A"/>
    <property type="chains" value="A=2-362"/>
</dbReference>
<dbReference type="PDB" id="8TII">
    <property type="method" value="EM"/>
    <property type="resolution" value="3.00 A"/>
    <property type="chains" value="R=2-362"/>
</dbReference>
<dbReference type="PDB" id="8TIL">
    <property type="method" value="EM"/>
    <property type="resolution" value="3.80 A"/>
    <property type="chains" value="R=2-362"/>
</dbReference>
<dbReference type="PDB" id="8TIN">
    <property type="method" value="EM"/>
    <property type="resolution" value="4.00 A"/>
    <property type="chains" value="R=2-362"/>
</dbReference>
<dbReference type="PDB" id="8TIO">
    <property type="method" value="EM"/>
    <property type="resolution" value="3.60 A"/>
    <property type="chains" value="R=2-362"/>
</dbReference>
<dbReference type="PDB" id="8VJ9">
    <property type="method" value="EM"/>
    <property type="resolution" value="3.30 A"/>
    <property type="chains" value="R=2-362"/>
</dbReference>
<dbReference type="PDBsum" id="6K3F"/>
<dbReference type="PDBsum" id="7SK3"/>
<dbReference type="PDBsum" id="7SK4"/>
<dbReference type="PDBsum" id="7SK5"/>
<dbReference type="PDBsum" id="7SK6"/>
<dbReference type="PDBsum" id="7SK7"/>
<dbReference type="PDBsum" id="7SK8"/>
<dbReference type="PDBsum" id="7SK9"/>
<dbReference type="PDBsum" id="8TII"/>
<dbReference type="PDBsum" id="8TIL"/>
<dbReference type="PDBsum" id="8TIN"/>
<dbReference type="PDBsum" id="8TIO"/>
<dbReference type="PDBsum" id="8VJ9"/>
<dbReference type="EMDB" id="EMD-25171"/>
<dbReference type="EMDB" id="EMD-25172"/>
<dbReference type="EMDB" id="EMD-25173"/>
<dbReference type="EMDB" id="EMD-25174"/>
<dbReference type="EMDB" id="EMD-25175"/>
<dbReference type="EMDB" id="EMD-25176"/>
<dbReference type="EMDB" id="EMD-25177"/>
<dbReference type="EMDB" id="EMD-41289"/>
<dbReference type="EMDB" id="EMD-41295"/>
<dbReference type="EMDB" id="EMD-41296"/>
<dbReference type="EMDB" id="EMD-41297"/>
<dbReference type="EMDB" id="EMD-43277"/>
<dbReference type="SMR" id="P25106"/>
<dbReference type="BioGRID" id="121321">
    <property type="interactions" value="55"/>
</dbReference>
<dbReference type="CORUM" id="P25106"/>
<dbReference type="FunCoup" id="P25106">
    <property type="interactions" value="775"/>
</dbReference>
<dbReference type="IntAct" id="P25106">
    <property type="interactions" value="32"/>
</dbReference>
<dbReference type="MINT" id="P25106"/>
<dbReference type="STRING" id="9606.ENSP00000272928"/>
<dbReference type="BindingDB" id="P25106"/>
<dbReference type="ChEMBL" id="CHEMBL2010631"/>
<dbReference type="DrugCentral" id="P25106"/>
<dbReference type="GuidetoPHARMACOLOGY" id="80"/>
<dbReference type="GlyCosmos" id="P25106">
    <property type="glycosylation" value="3 sites, No reported glycans"/>
</dbReference>
<dbReference type="GlyGen" id="P25106">
    <property type="glycosylation" value="4 sites, 1 N-linked glycan (1 site)"/>
</dbReference>
<dbReference type="iPTMnet" id="P25106"/>
<dbReference type="PhosphoSitePlus" id="P25106"/>
<dbReference type="SwissPalm" id="P25106"/>
<dbReference type="BioMuta" id="ACKR3"/>
<dbReference type="DMDM" id="115502380"/>
<dbReference type="jPOST" id="P25106"/>
<dbReference type="MassIVE" id="P25106"/>
<dbReference type="PaxDb" id="9606-ENSP00000272928"/>
<dbReference type="PeptideAtlas" id="P25106"/>
<dbReference type="ProteomicsDB" id="54262"/>
<dbReference type="Pumba" id="P25106"/>
<dbReference type="ABCD" id="P25106">
    <property type="antibodies" value="9 sequenced antibodies"/>
</dbReference>
<dbReference type="Antibodypedia" id="47699">
    <property type="antibodies" value="873 antibodies from 40 providers"/>
</dbReference>
<dbReference type="DNASU" id="57007"/>
<dbReference type="Ensembl" id="ENST00000272928.4">
    <property type="protein sequence ID" value="ENSP00000272928.3"/>
    <property type="gene ID" value="ENSG00000144476.6"/>
</dbReference>
<dbReference type="GeneID" id="57007"/>
<dbReference type="KEGG" id="hsa:57007"/>
<dbReference type="MANE-Select" id="ENST00000272928.4">
    <property type="protein sequence ID" value="ENSP00000272928.3"/>
    <property type="RefSeq nucleotide sequence ID" value="NM_020311.3"/>
    <property type="RefSeq protein sequence ID" value="NP_064707.1"/>
</dbReference>
<dbReference type="UCSC" id="uc002vwd.4">
    <property type="organism name" value="human"/>
</dbReference>
<dbReference type="AGR" id="HGNC:23692"/>
<dbReference type="CTD" id="57007"/>
<dbReference type="DisGeNET" id="57007"/>
<dbReference type="GeneCards" id="ACKR3"/>
<dbReference type="HGNC" id="HGNC:23692">
    <property type="gene designation" value="ACKR3"/>
</dbReference>
<dbReference type="HPA" id="ENSG00000144476">
    <property type="expression patterns" value="Low tissue specificity"/>
</dbReference>
<dbReference type="MalaCards" id="ACKR3"/>
<dbReference type="MIM" id="610376">
    <property type="type" value="gene"/>
</dbReference>
<dbReference type="MIM" id="619215">
    <property type="type" value="phenotype"/>
</dbReference>
<dbReference type="neXtProt" id="NX_P25106"/>
<dbReference type="OpenTargets" id="ENSG00000144476"/>
<dbReference type="PharmGKB" id="PA162383053"/>
<dbReference type="VEuPathDB" id="HostDB:ENSG00000144476"/>
<dbReference type="eggNOG" id="KOG3656">
    <property type="taxonomic scope" value="Eukaryota"/>
</dbReference>
<dbReference type="GeneTree" id="ENSGT01110000267168"/>
<dbReference type="HOGENOM" id="CLU_009579_8_3_1"/>
<dbReference type="InParanoid" id="P25106"/>
<dbReference type="OMA" id="CRPVYPP"/>
<dbReference type="OrthoDB" id="5963140at2759"/>
<dbReference type="PAN-GO" id="P25106">
    <property type="GO annotations" value="7 GO annotations based on evolutionary models"/>
</dbReference>
<dbReference type="PhylomeDB" id="P25106"/>
<dbReference type="TreeFam" id="TF333489"/>
<dbReference type="PathwayCommons" id="P25106"/>
<dbReference type="Reactome" id="R-HSA-380108">
    <property type="pathway name" value="Chemokine receptors bind chemokines"/>
</dbReference>
<dbReference type="Reactome" id="R-HSA-418594">
    <property type="pathway name" value="G alpha (i) signalling events"/>
</dbReference>
<dbReference type="SignaLink" id="P25106"/>
<dbReference type="SIGNOR" id="P25106"/>
<dbReference type="BioGRID-ORCS" id="57007">
    <property type="hits" value="10 hits in 1128 CRISPR screens"/>
</dbReference>
<dbReference type="ChiTaRS" id="ACKR3">
    <property type="organism name" value="human"/>
</dbReference>
<dbReference type="GeneWiki" id="CXCR7"/>
<dbReference type="GenomeRNAi" id="57007"/>
<dbReference type="Pharos" id="P25106">
    <property type="development level" value="Tchem"/>
</dbReference>
<dbReference type="PRO" id="PR:P25106"/>
<dbReference type="Proteomes" id="UP000005640">
    <property type="component" value="Chromosome 2"/>
</dbReference>
<dbReference type="RNAct" id="P25106">
    <property type="molecule type" value="protein"/>
</dbReference>
<dbReference type="Bgee" id="ENSG00000144476">
    <property type="expression patterns" value="Expressed in synovial joint and 194 other cell types or tissues"/>
</dbReference>
<dbReference type="ExpressionAtlas" id="P25106">
    <property type="expression patterns" value="baseline and differential"/>
</dbReference>
<dbReference type="GO" id="GO:0009986">
    <property type="term" value="C:cell surface"/>
    <property type="evidence" value="ECO:0000314"/>
    <property type="project" value="UniProtKB"/>
</dbReference>
<dbReference type="GO" id="GO:0005905">
    <property type="term" value="C:clathrin-coated pit"/>
    <property type="evidence" value="ECO:0000314"/>
    <property type="project" value="UniProtKB"/>
</dbReference>
<dbReference type="GO" id="GO:0005769">
    <property type="term" value="C:early endosome"/>
    <property type="evidence" value="ECO:0007669"/>
    <property type="project" value="UniProtKB-SubCell"/>
</dbReference>
<dbReference type="GO" id="GO:0005768">
    <property type="term" value="C:endosome"/>
    <property type="evidence" value="ECO:0000314"/>
    <property type="project" value="UniProtKB"/>
</dbReference>
<dbReference type="GO" id="GO:0009897">
    <property type="term" value="C:external side of plasma membrane"/>
    <property type="evidence" value="ECO:0000318"/>
    <property type="project" value="GO_Central"/>
</dbReference>
<dbReference type="GO" id="GO:0043231">
    <property type="term" value="C:intracellular membrane-bounded organelle"/>
    <property type="evidence" value="ECO:0000314"/>
    <property type="project" value="HPA"/>
</dbReference>
<dbReference type="GO" id="GO:0005886">
    <property type="term" value="C:plasma membrane"/>
    <property type="evidence" value="ECO:0000314"/>
    <property type="project" value="UniProtKB"/>
</dbReference>
<dbReference type="GO" id="GO:0055037">
    <property type="term" value="C:recycling endosome"/>
    <property type="evidence" value="ECO:0007669"/>
    <property type="project" value="UniProtKB-SubCell"/>
</dbReference>
<dbReference type="GO" id="GO:0019957">
    <property type="term" value="F:C-C chemokine binding"/>
    <property type="evidence" value="ECO:0000318"/>
    <property type="project" value="GO_Central"/>
</dbReference>
<dbReference type="GO" id="GO:0016493">
    <property type="term" value="F:C-C chemokine receptor activity"/>
    <property type="evidence" value="ECO:0000318"/>
    <property type="project" value="GO_Central"/>
</dbReference>
<dbReference type="GO" id="GO:0019958">
    <property type="term" value="F:C-X-C chemokine binding"/>
    <property type="evidence" value="ECO:0000315"/>
    <property type="project" value="UniProtKB"/>
</dbReference>
<dbReference type="GO" id="GO:0016494">
    <property type="term" value="F:C-X-C chemokine receptor activity"/>
    <property type="evidence" value="ECO:0000315"/>
    <property type="project" value="BHF-UCL"/>
</dbReference>
<dbReference type="GO" id="GO:0015026">
    <property type="term" value="F:coreceptor activity"/>
    <property type="evidence" value="ECO:0007669"/>
    <property type="project" value="InterPro"/>
</dbReference>
<dbReference type="GO" id="GO:0005044">
    <property type="term" value="F:scavenger receptor activity"/>
    <property type="evidence" value="ECO:0000315"/>
    <property type="project" value="UniProtKB"/>
</dbReference>
<dbReference type="GO" id="GO:0001525">
    <property type="term" value="P:angiogenesis"/>
    <property type="evidence" value="ECO:0007669"/>
    <property type="project" value="InterPro"/>
</dbReference>
<dbReference type="GO" id="GO:0019722">
    <property type="term" value="P:calcium-mediated signaling"/>
    <property type="evidence" value="ECO:0000318"/>
    <property type="project" value="GO_Central"/>
</dbReference>
<dbReference type="GO" id="GO:0007155">
    <property type="term" value="P:cell adhesion"/>
    <property type="evidence" value="ECO:0007669"/>
    <property type="project" value="UniProtKB-KW"/>
</dbReference>
<dbReference type="GO" id="GO:0060326">
    <property type="term" value="P:cell chemotaxis"/>
    <property type="evidence" value="ECO:0000318"/>
    <property type="project" value="GO_Central"/>
</dbReference>
<dbReference type="GO" id="GO:0070098">
    <property type="term" value="P:chemokine-mediated signaling pathway"/>
    <property type="evidence" value="ECO:0000315"/>
    <property type="project" value="BHF-UCL"/>
</dbReference>
<dbReference type="GO" id="GO:0006955">
    <property type="term" value="P:immune response"/>
    <property type="evidence" value="ECO:0000318"/>
    <property type="project" value="GO_Central"/>
</dbReference>
<dbReference type="GO" id="GO:0008285">
    <property type="term" value="P:negative regulation of cell population proliferation"/>
    <property type="evidence" value="ECO:0007669"/>
    <property type="project" value="Ensembl"/>
</dbReference>
<dbReference type="GO" id="GO:1902230">
    <property type="term" value="P:negative regulation of intrinsic apoptotic signaling pathway in response to DNA damage"/>
    <property type="evidence" value="ECO:0000315"/>
    <property type="project" value="BHF-UCL"/>
</dbReference>
<dbReference type="GO" id="GO:0021557">
    <property type="term" value="P:oculomotor nerve development"/>
    <property type="evidence" value="ECO:0000315"/>
    <property type="project" value="UniProtKB"/>
</dbReference>
<dbReference type="GO" id="GO:0007204">
    <property type="term" value="P:positive regulation of cytosolic calcium ion concentration"/>
    <property type="evidence" value="ECO:0000318"/>
    <property type="project" value="GO_Central"/>
</dbReference>
<dbReference type="GO" id="GO:0070374">
    <property type="term" value="P:positive regulation of ERK1 and ERK2 cascade"/>
    <property type="evidence" value="ECO:0000315"/>
    <property type="project" value="UniProtKB"/>
</dbReference>
<dbReference type="GO" id="GO:1905322">
    <property type="term" value="P:positive regulation of mesenchymal stem cell migration"/>
    <property type="evidence" value="ECO:0007669"/>
    <property type="project" value="Ensembl"/>
</dbReference>
<dbReference type="GO" id="GO:0031623">
    <property type="term" value="P:receptor internalization"/>
    <property type="evidence" value="ECO:0000315"/>
    <property type="project" value="UniProtKB"/>
</dbReference>
<dbReference type="GO" id="GO:0001570">
    <property type="term" value="P:vasculogenesis"/>
    <property type="evidence" value="ECO:0007669"/>
    <property type="project" value="InterPro"/>
</dbReference>
<dbReference type="CDD" id="cd14987">
    <property type="entry name" value="7tmA_ACKR3_CXCR7"/>
    <property type="match status" value="1"/>
</dbReference>
<dbReference type="FunFam" id="1.20.1070.10:FF:000141">
    <property type="entry name" value="atypical chemokine receptor 3"/>
    <property type="match status" value="1"/>
</dbReference>
<dbReference type="Gene3D" id="1.20.1070.10">
    <property type="entry name" value="Rhodopsin 7-helix transmembrane proteins"/>
    <property type="match status" value="1"/>
</dbReference>
<dbReference type="InterPro" id="IPR001416">
    <property type="entry name" value="ACKR3"/>
</dbReference>
<dbReference type="InterPro" id="IPR000276">
    <property type="entry name" value="GPCR_Rhodpsn"/>
</dbReference>
<dbReference type="InterPro" id="IPR017452">
    <property type="entry name" value="GPCR_Rhodpsn_7TM"/>
</dbReference>
<dbReference type="InterPro" id="IPR047143">
    <property type="entry name" value="GPER1-like"/>
</dbReference>
<dbReference type="PANTHER" id="PTHR24226:SF5">
    <property type="entry name" value="CHEMOKINE (C-X-C MOTIF) RECEPTOR 7"/>
    <property type="match status" value="1"/>
</dbReference>
<dbReference type="PANTHER" id="PTHR24226">
    <property type="entry name" value="G-PROTEIN COUPLED RECEPTOR 182 AND ESTROGEN RECEPTOR 1"/>
    <property type="match status" value="1"/>
</dbReference>
<dbReference type="Pfam" id="PF00001">
    <property type="entry name" value="7tm_1"/>
    <property type="match status" value="1"/>
</dbReference>
<dbReference type="PRINTS" id="PR00237">
    <property type="entry name" value="GPCRRHODOPSN"/>
</dbReference>
<dbReference type="PRINTS" id="PR00646">
    <property type="entry name" value="RDC1ORPHANR"/>
</dbReference>
<dbReference type="SUPFAM" id="SSF81321">
    <property type="entry name" value="Family A G protein-coupled receptor-like"/>
    <property type="match status" value="1"/>
</dbReference>
<dbReference type="PROSITE" id="PS00237">
    <property type="entry name" value="G_PROTEIN_RECEP_F1_1"/>
    <property type="match status" value="1"/>
</dbReference>
<dbReference type="PROSITE" id="PS50262">
    <property type="entry name" value="G_PROTEIN_RECEP_F1_2"/>
    <property type="match status" value="1"/>
</dbReference>
<accession>P25106</accession>
<accession>A8K6J4</accession>
<accession>Q53RV4</accession>
<accession>Q8NE10</accession>
<accession>Q92938</accession>
<accession>Q92986</accession>
<protein>
    <recommendedName>
        <fullName evidence="22">Atypical chemokine receptor 3</fullName>
    </recommendedName>
    <alternativeName>
        <fullName>C-X-C chemokine receptor type 7</fullName>
        <shortName>CXC-R7</shortName>
        <shortName>CXCR-7</shortName>
    </alternativeName>
    <alternativeName>
        <fullName>Chemokine orphan receptor 1</fullName>
    </alternativeName>
    <alternativeName>
        <fullName>G-protein coupled receptor 159</fullName>
    </alternativeName>
    <alternativeName>
        <fullName>G-protein coupled receptor RDC1 homolog</fullName>
        <shortName>RDC-1</shortName>
    </alternativeName>
</protein>
<organism>
    <name type="scientific">Homo sapiens</name>
    <name type="common">Human</name>
    <dbReference type="NCBI Taxonomy" id="9606"/>
    <lineage>
        <taxon>Eukaryota</taxon>
        <taxon>Metazoa</taxon>
        <taxon>Chordata</taxon>
        <taxon>Craniata</taxon>
        <taxon>Vertebrata</taxon>
        <taxon>Euteleostomi</taxon>
        <taxon>Mammalia</taxon>
        <taxon>Eutheria</taxon>
        <taxon>Euarchontoglires</taxon>
        <taxon>Primates</taxon>
        <taxon>Haplorrhini</taxon>
        <taxon>Catarrhini</taxon>
        <taxon>Hominidae</taxon>
        <taxon>Homo</taxon>
    </lineage>
</organism>
<keyword id="KW-0002">3D-structure</keyword>
<keyword id="KW-0130">Cell adhesion</keyword>
<keyword id="KW-1003">Cell membrane</keyword>
<keyword id="KW-0217">Developmental protein</keyword>
<keyword id="KW-0225">Disease variant</keyword>
<keyword id="KW-1015">Disulfide bond</keyword>
<keyword id="KW-0967">Endosome</keyword>
<keyword id="KW-0297">G-protein coupled receptor</keyword>
<keyword id="KW-0325">Glycoprotein</keyword>
<keyword id="KW-0945">Host-virus interaction</keyword>
<keyword id="KW-0472">Membrane</keyword>
<keyword id="KW-0597">Phosphoprotein</keyword>
<keyword id="KW-1267">Proteomics identification</keyword>
<keyword id="KW-0675">Receptor</keyword>
<keyword id="KW-1185">Reference proteome</keyword>
<keyword id="KW-0807">Transducer</keyword>
<keyword id="KW-0812">Transmembrane</keyword>
<keyword id="KW-1133">Transmembrane helix</keyword>
<keyword id="KW-0832">Ubl conjugation</keyword>